<feature type="chain" id="PRO_0000142572" description="Nus factor SuhB">
    <location>
        <begin position="1"/>
        <end position="267"/>
    </location>
</feature>
<feature type="binding site" evidence="2">
    <location>
        <position position="67"/>
    </location>
    <ligand>
        <name>Mg(2+)</name>
        <dbReference type="ChEBI" id="CHEBI:18420"/>
    </ligand>
</feature>
<feature type="binding site" evidence="1">
    <location>
        <position position="67"/>
    </location>
    <ligand>
        <name>substrate</name>
    </ligand>
</feature>
<feature type="binding site" evidence="2">
    <location>
        <position position="84"/>
    </location>
    <ligand>
        <name>Mg(2+)</name>
        <dbReference type="ChEBI" id="CHEBI:18420"/>
    </ligand>
</feature>
<feature type="binding site" evidence="1">
    <location>
        <begin position="86"/>
        <end position="89"/>
    </location>
    <ligand>
        <name>substrate</name>
    </ligand>
</feature>
<feature type="binding site" evidence="2">
    <location>
        <position position="86"/>
    </location>
    <ligand>
        <name>Mg(2+)</name>
        <dbReference type="ChEBI" id="CHEBI:18420"/>
    </ligand>
</feature>
<feature type="binding site" evidence="1">
    <location>
        <position position="183"/>
    </location>
    <ligand>
        <name>substrate</name>
    </ligand>
</feature>
<feature type="binding site" evidence="1">
    <location>
        <position position="212"/>
    </location>
    <ligand>
        <name>substrate</name>
    </ligand>
</feature>
<comment type="function">
    <text evidence="2">Part of the processive rRNA transcription and antitermination complex (rrnTAC). The complex forms an RNA-chaperone ring around the RNA exit tunnel of RNA polymerase (RNAP). It supports rapid transcription and antitermination of rRNA operons, cotranscriptional rRNA folding, and annealing of distal rRNA regions to allow correct ribosome biogenesis. This subunit may play a central role in organizing the structure.</text>
</comment>
<comment type="catalytic activity">
    <reaction evidence="2">
        <text>a myo-inositol phosphate + H2O = myo-inositol + phosphate</text>
        <dbReference type="Rhea" id="RHEA:24056"/>
        <dbReference type="ChEBI" id="CHEBI:15377"/>
        <dbReference type="ChEBI" id="CHEBI:17268"/>
        <dbReference type="ChEBI" id="CHEBI:43474"/>
        <dbReference type="ChEBI" id="CHEBI:84139"/>
        <dbReference type="EC" id="3.1.3.25"/>
    </reaction>
</comment>
<comment type="cofactor">
    <cofactor evidence="2">
        <name>Mg(2+)</name>
        <dbReference type="ChEBI" id="CHEBI:18420"/>
    </cofactor>
</comment>
<comment type="subunit">
    <text evidence="2">Homodimer. The rRNA transcription and antitermination complex (rrnTAC) consists of RNA polymerase (RNAP), NusA, NusB, NusE (rpsJ), NusG, SubB, ribosomal protein S4, DNA and precursor rRNA; S4 is more flexible than other subunits.</text>
</comment>
<comment type="subcellular location">
    <subcellularLocation>
        <location evidence="2">Cytoplasm</location>
    </subcellularLocation>
</comment>
<comment type="similarity">
    <text evidence="3">Belongs to the inositol monophosphatase superfamily.</text>
</comment>
<sequence length="267" mass="29158">MHPMLTIAVRAARKAGNVIAKNYETPDAVEASQKGSNDFVTNVDKAAEAVIIDTIRKSYPQHTIITEESGEHVGTDQDVQWVIDPLDGTTNFIKRLPHFAVSIAVRIKGRTEVAVVYDPMRNELFTATRGQGAQLNGYRLRGSTARDLDGTILATGFPFKAKQYATTYINIIGKLFTECADFRRTGSAALDLAYVAAGRVDGFFEIGLRPWDFAAGELLVREAGGIVSDFTGGHNYMMTGNIVAGNPRVVKAMLANMRDELSDALKR</sequence>
<dbReference type="EC" id="3.1.3.25" evidence="2"/>
<dbReference type="EMBL" id="AE006468">
    <property type="protein sequence ID" value="AAL21440.1"/>
    <property type="molecule type" value="Genomic_DNA"/>
</dbReference>
<dbReference type="RefSeq" id="NP_461481.1">
    <property type="nucleotide sequence ID" value="NC_003197.2"/>
</dbReference>
<dbReference type="RefSeq" id="WP_000553467.1">
    <property type="nucleotide sequence ID" value="NC_003197.2"/>
</dbReference>
<dbReference type="SMR" id="P58537"/>
<dbReference type="STRING" id="99287.STM2546"/>
<dbReference type="PaxDb" id="99287-STM2546"/>
<dbReference type="GeneID" id="1254068"/>
<dbReference type="KEGG" id="stm:STM2546"/>
<dbReference type="PATRIC" id="fig|99287.12.peg.2686"/>
<dbReference type="HOGENOM" id="CLU_044118_0_4_6"/>
<dbReference type="OMA" id="ERGLHPW"/>
<dbReference type="PhylomeDB" id="P58537"/>
<dbReference type="BioCyc" id="SENT99287:STM2546-MONOMER"/>
<dbReference type="Proteomes" id="UP000001014">
    <property type="component" value="Chromosome"/>
</dbReference>
<dbReference type="GO" id="GO:0005737">
    <property type="term" value="C:cytoplasm"/>
    <property type="evidence" value="ECO:0007669"/>
    <property type="project" value="UniProtKB-SubCell"/>
</dbReference>
<dbReference type="GO" id="GO:0008934">
    <property type="term" value="F:inositol monophosphate 1-phosphatase activity"/>
    <property type="evidence" value="ECO:0000318"/>
    <property type="project" value="GO_Central"/>
</dbReference>
<dbReference type="GO" id="GO:0046872">
    <property type="term" value="F:metal ion binding"/>
    <property type="evidence" value="ECO:0007669"/>
    <property type="project" value="UniProtKB-KW"/>
</dbReference>
<dbReference type="GO" id="GO:0003723">
    <property type="term" value="F:RNA binding"/>
    <property type="evidence" value="ECO:0007669"/>
    <property type="project" value="UniProtKB-KW"/>
</dbReference>
<dbReference type="GO" id="GO:0006020">
    <property type="term" value="P:inositol metabolic process"/>
    <property type="evidence" value="ECO:0000318"/>
    <property type="project" value="GO_Central"/>
</dbReference>
<dbReference type="GO" id="GO:0046854">
    <property type="term" value="P:phosphatidylinositol phosphate biosynthetic process"/>
    <property type="evidence" value="ECO:0007669"/>
    <property type="project" value="InterPro"/>
</dbReference>
<dbReference type="GO" id="GO:0042254">
    <property type="term" value="P:ribosome biogenesis"/>
    <property type="evidence" value="ECO:0007669"/>
    <property type="project" value="UniProtKB-KW"/>
</dbReference>
<dbReference type="GO" id="GO:0007165">
    <property type="term" value="P:signal transduction"/>
    <property type="evidence" value="ECO:0000318"/>
    <property type="project" value="GO_Central"/>
</dbReference>
<dbReference type="GO" id="GO:0031564">
    <property type="term" value="P:transcription antitermination"/>
    <property type="evidence" value="ECO:0007669"/>
    <property type="project" value="UniProtKB-KW"/>
</dbReference>
<dbReference type="CDD" id="cd01639">
    <property type="entry name" value="IMPase"/>
    <property type="match status" value="1"/>
</dbReference>
<dbReference type="FunFam" id="3.30.540.10:FF:000003">
    <property type="entry name" value="Inositol-1-monophosphatase"/>
    <property type="match status" value="1"/>
</dbReference>
<dbReference type="FunFam" id="3.40.190.80:FF:000004">
    <property type="entry name" value="Inositol-1-monophosphatase"/>
    <property type="match status" value="1"/>
</dbReference>
<dbReference type="Gene3D" id="3.40.190.80">
    <property type="match status" value="1"/>
</dbReference>
<dbReference type="Gene3D" id="3.30.540.10">
    <property type="entry name" value="Fructose-1,6-Bisphosphatase, subunit A, domain 1"/>
    <property type="match status" value="1"/>
</dbReference>
<dbReference type="InterPro" id="IPR033942">
    <property type="entry name" value="IMPase"/>
</dbReference>
<dbReference type="InterPro" id="IPR020583">
    <property type="entry name" value="Inositol_monoP_metal-BS"/>
</dbReference>
<dbReference type="InterPro" id="IPR000760">
    <property type="entry name" value="Inositol_monophosphatase-like"/>
</dbReference>
<dbReference type="InterPro" id="IPR020550">
    <property type="entry name" value="Inositol_monophosphatase_CS"/>
</dbReference>
<dbReference type="InterPro" id="IPR022337">
    <property type="entry name" value="Inositol_monophosphatase_SuhB"/>
</dbReference>
<dbReference type="NCBIfam" id="NF008027">
    <property type="entry name" value="PRK10757.1"/>
    <property type="match status" value="1"/>
</dbReference>
<dbReference type="PANTHER" id="PTHR20854">
    <property type="entry name" value="INOSITOL MONOPHOSPHATASE"/>
    <property type="match status" value="1"/>
</dbReference>
<dbReference type="PANTHER" id="PTHR20854:SF4">
    <property type="entry name" value="INOSITOL-1-MONOPHOSPHATASE-RELATED"/>
    <property type="match status" value="1"/>
</dbReference>
<dbReference type="Pfam" id="PF00459">
    <property type="entry name" value="Inositol_P"/>
    <property type="match status" value="1"/>
</dbReference>
<dbReference type="PRINTS" id="PR00377">
    <property type="entry name" value="IMPHPHTASES"/>
</dbReference>
<dbReference type="PRINTS" id="PR01959">
    <property type="entry name" value="SBIMPHPHTASE"/>
</dbReference>
<dbReference type="SUPFAM" id="SSF56655">
    <property type="entry name" value="Carbohydrate phosphatase"/>
    <property type="match status" value="1"/>
</dbReference>
<dbReference type="PROSITE" id="PS00629">
    <property type="entry name" value="IMP_1"/>
    <property type="match status" value="1"/>
</dbReference>
<dbReference type="PROSITE" id="PS00630">
    <property type="entry name" value="IMP_2"/>
    <property type="match status" value="1"/>
</dbReference>
<organism>
    <name type="scientific">Salmonella typhimurium (strain LT2 / SGSC1412 / ATCC 700720)</name>
    <dbReference type="NCBI Taxonomy" id="99287"/>
    <lineage>
        <taxon>Bacteria</taxon>
        <taxon>Pseudomonadati</taxon>
        <taxon>Pseudomonadota</taxon>
        <taxon>Gammaproteobacteria</taxon>
        <taxon>Enterobacterales</taxon>
        <taxon>Enterobacteriaceae</taxon>
        <taxon>Salmonella</taxon>
    </lineage>
</organism>
<protein>
    <recommendedName>
        <fullName evidence="2">Nus factor SuhB</fullName>
    </recommendedName>
    <alternativeName>
        <fullName>Inositol-1-monophosphatase</fullName>
        <shortName>I-1-Pase</shortName>
        <shortName>IMPase</shortName>
        <shortName>Inositol-1-phosphatase</shortName>
        <ecNumber evidence="2">3.1.3.25</ecNumber>
    </alternativeName>
</protein>
<proteinExistence type="inferred from homology"/>
<accession>P58537</accession>
<keyword id="KW-0143">Chaperone</keyword>
<keyword id="KW-0963">Cytoplasm</keyword>
<keyword id="KW-0378">Hydrolase</keyword>
<keyword id="KW-0460">Magnesium</keyword>
<keyword id="KW-0479">Metal-binding</keyword>
<keyword id="KW-1185">Reference proteome</keyword>
<keyword id="KW-0690">Ribosome biogenesis</keyword>
<keyword id="KW-0694">RNA-binding</keyword>
<keyword id="KW-0804">Transcription</keyword>
<keyword id="KW-0889">Transcription antitermination</keyword>
<keyword id="KW-0805">Transcription regulation</keyword>
<name>SUHB_SALTY</name>
<gene>
    <name type="primary">suhB</name>
    <name type="ordered locus">STM2546</name>
</gene>
<evidence type="ECO:0000250" key="1"/>
<evidence type="ECO:0000250" key="2">
    <source>
        <dbReference type="UniProtKB" id="P0ADG4"/>
    </source>
</evidence>
<evidence type="ECO:0000305" key="3"/>
<reference key="1">
    <citation type="journal article" date="2001" name="Nature">
        <title>Complete genome sequence of Salmonella enterica serovar Typhimurium LT2.</title>
        <authorList>
            <person name="McClelland M."/>
            <person name="Sanderson K.E."/>
            <person name="Spieth J."/>
            <person name="Clifton S.W."/>
            <person name="Latreille P."/>
            <person name="Courtney L."/>
            <person name="Porwollik S."/>
            <person name="Ali J."/>
            <person name="Dante M."/>
            <person name="Du F."/>
            <person name="Hou S."/>
            <person name="Layman D."/>
            <person name="Leonard S."/>
            <person name="Nguyen C."/>
            <person name="Scott K."/>
            <person name="Holmes A."/>
            <person name="Grewal N."/>
            <person name="Mulvaney E."/>
            <person name="Ryan E."/>
            <person name="Sun H."/>
            <person name="Florea L."/>
            <person name="Miller W."/>
            <person name="Stoneking T."/>
            <person name="Nhan M."/>
            <person name="Waterston R."/>
            <person name="Wilson R.K."/>
        </authorList>
    </citation>
    <scope>NUCLEOTIDE SEQUENCE [LARGE SCALE GENOMIC DNA]</scope>
    <source>
        <strain>LT2 / SGSC1412 / ATCC 700720</strain>
    </source>
</reference>